<evidence type="ECO:0000250" key="1"/>
<evidence type="ECO:0000255" key="2">
    <source>
        <dbReference type="PROSITE-ProRule" id="PRU00812"/>
    </source>
</evidence>
<evidence type="ECO:0000256" key="3">
    <source>
        <dbReference type="SAM" id="MobiDB-lite"/>
    </source>
</evidence>
<evidence type="ECO:0000305" key="4"/>
<dbReference type="EC" id="3.1.3.16"/>
<dbReference type="EMBL" id="AC087552">
    <property type="protein sequence ID" value="AAT94046.1"/>
    <property type="molecule type" value="Genomic_DNA"/>
</dbReference>
<dbReference type="EMBL" id="AP008211">
    <property type="protein sequence ID" value="BAF16480.2"/>
    <property type="status" value="ALT_SEQ"/>
    <property type="molecule type" value="Genomic_DNA"/>
</dbReference>
<dbReference type="EMBL" id="AP014961">
    <property type="protein sequence ID" value="BAS92137.1"/>
    <property type="molecule type" value="Genomic_DNA"/>
</dbReference>
<dbReference type="EMBL" id="CM000142">
    <property type="protein sequence ID" value="EEE62232.1"/>
    <property type="molecule type" value="Genomic_DNA"/>
</dbReference>
<dbReference type="RefSeq" id="XP_015640837.1">
    <property type="nucleotide sequence ID" value="XM_015785351.1"/>
</dbReference>
<dbReference type="SMR" id="Q6AVZ9"/>
<dbReference type="FunCoup" id="Q6AVZ9">
    <property type="interactions" value="2368"/>
</dbReference>
<dbReference type="STRING" id="39947.Q6AVZ9"/>
<dbReference type="PaxDb" id="39947-Q6AVZ9"/>
<dbReference type="EnsemblPlants" id="Os05t0134300-01">
    <property type="protein sequence ID" value="Os05t0134300-01"/>
    <property type="gene ID" value="Os05g0134300"/>
</dbReference>
<dbReference type="Gramene" id="Os05t0134300-01">
    <property type="protein sequence ID" value="Os05t0134300-01"/>
    <property type="gene ID" value="Os05g0134300"/>
</dbReference>
<dbReference type="KEGG" id="dosa:Os05g0134300"/>
<dbReference type="eggNOG" id="KOG4780">
    <property type="taxonomic scope" value="Eukaryota"/>
</dbReference>
<dbReference type="HOGENOM" id="CLU_008740_0_0_1"/>
<dbReference type="InParanoid" id="Q6AVZ9"/>
<dbReference type="OMA" id="WMGPSNA"/>
<dbReference type="OrthoDB" id="2590500at2759"/>
<dbReference type="Proteomes" id="UP000000763">
    <property type="component" value="Chromosome 5"/>
</dbReference>
<dbReference type="Proteomes" id="UP000007752">
    <property type="component" value="Chromosome 5"/>
</dbReference>
<dbReference type="Proteomes" id="UP000059680">
    <property type="component" value="Chromosome 5"/>
</dbReference>
<dbReference type="GO" id="GO:0005737">
    <property type="term" value="C:cytoplasm"/>
    <property type="evidence" value="ECO:0000318"/>
    <property type="project" value="GO_Central"/>
</dbReference>
<dbReference type="GO" id="GO:0005634">
    <property type="term" value="C:nucleus"/>
    <property type="evidence" value="ECO:0000318"/>
    <property type="project" value="GO_Central"/>
</dbReference>
<dbReference type="GO" id="GO:0043175">
    <property type="term" value="F:RNA polymerase core enzyme binding"/>
    <property type="evidence" value="ECO:0007669"/>
    <property type="project" value="InterPro"/>
</dbReference>
<dbReference type="GO" id="GO:0008420">
    <property type="term" value="F:RNA polymerase II CTD heptapeptide repeat phosphatase activity"/>
    <property type="evidence" value="ECO:0000318"/>
    <property type="project" value="GO_Central"/>
</dbReference>
<dbReference type="GO" id="GO:0008270">
    <property type="term" value="F:zinc ion binding"/>
    <property type="evidence" value="ECO:0007669"/>
    <property type="project" value="UniProtKB-KW"/>
</dbReference>
<dbReference type="FunFam" id="1.25.40.820:FF:000003">
    <property type="entry name" value="Putative RNA polymerase II subunit B1 CTD phosphatase RPAP2 homolog"/>
    <property type="match status" value="1"/>
</dbReference>
<dbReference type="Gene3D" id="1.25.40.820">
    <property type="match status" value="1"/>
</dbReference>
<dbReference type="InterPro" id="IPR039693">
    <property type="entry name" value="Rtr1/RPAP2"/>
</dbReference>
<dbReference type="InterPro" id="IPR007308">
    <property type="entry name" value="Rtr1/RPAP2_dom"/>
</dbReference>
<dbReference type="InterPro" id="IPR038534">
    <property type="entry name" value="Rtr1/RPAP2_sf"/>
</dbReference>
<dbReference type="PANTHER" id="PTHR14732">
    <property type="entry name" value="RNA POLYMERASE II SUBUNIT B1 CTD PHOSPHATASE RPAP2-RELATED"/>
    <property type="match status" value="1"/>
</dbReference>
<dbReference type="PANTHER" id="PTHR14732:SF0">
    <property type="entry name" value="RNA POLYMERASE II SUBUNIT B1 CTD PHOSPHATASE RPAP2-RELATED"/>
    <property type="match status" value="1"/>
</dbReference>
<dbReference type="Pfam" id="PF04181">
    <property type="entry name" value="RPAP2_Rtr1"/>
    <property type="match status" value="1"/>
</dbReference>
<dbReference type="PROSITE" id="PS51479">
    <property type="entry name" value="ZF_RTR1"/>
    <property type="match status" value="1"/>
</dbReference>
<comment type="function">
    <text evidence="1">Putative RNA polymerase II subunit B1 C-terminal domain (CTD) phosphatase involved in RNA polymerase II transcription regulation.</text>
</comment>
<comment type="catalytic activity">
    <reaction>
        <text>O-phospho-L-seryl-[protein] + H2O = L-seryl-[protein] + phosphate</text>
        <dbReference type="Rhea" id="RHEA:20629"/>
        <dbReference type="Rhea" id="RHEA-COMP:9863"/>
        <dbReference type="Rhea" id="RHEA-COMP:11604"/>
        <dbReference type="ChEBI" id="CHEBI:15377"/>
        <dbReference type="ChEBI" id="CHEBI:29999"/>
        <dbReference type="ChEBI" id="CHEBI:43474"/>
        <dbReference type="ChEBI" id="CHEBI:83421"/>
        <dbReference type="EC" id="3.1.3.16"/>
    </reaction>
</comment>
<comment type="catalytic activity">
    <reaction>
        <text>O-phospho-L-threonyl-[protein] + H2O = L-threonyl-[protein] + phosphate</text>
        <dbReference type="Rhea" id="RHEA:47004"/>
        <dbReference type="Rhea" id="RHEA-COMP:11060"/>
        <dbReference type="Rhea" id="RHEA-COMP:11605"/>
        <dbReference type="ChEBI" id="CHEBI:15377"/>
        <dbReference type="ChEBI" id="CHEBI:30013"/>
        <dbReference type="ChEBI" id="CHEBI:43474"/>
        <dbReference type="ChEBI" id="CHEBI:61977"/>
        <dbReference type="EC" id="3.1.3.16"/>
    </reaction>
</comment>
<comment type="subcellular location">
    <subcellularLocation>
        <location evidence="1">Nucleus</location>
    </subcellularLocation>
</comment>
<comment type="similarity">
    <text evidence="2 4">Belongs to the RPAP2 family.</text>
</comment>
<comment type="sequence caution" evidence="4">
    <conflict type="erroneous gene model prediction">
        <sequence resource="EMBL-CDS" id="BAF16480"/>
    </conflict>
</comment>
<gene>
    <name type="ordered locus">Os05g0134300</name>
    <name type="ordered locus">LOC_Os05g04370</name>
    <name type="ORF">OsJ_17019</name>
    <name type="ORF">P0519E07.4</name>
</gene>
<sequence length="726" mass="78331">MGPTTATDTGARMKPTTVASAVHRVQMALYDGAAASREPLLRAAASLLSGPDYADVVTERSIADACGYPACPNPLPSEDARGKAAPRFRISLREHRVYDLEEARKFCSERCLVASAAFGASLPPDRPFGVSPDRLDALVALFEGGGGGGDDGGLALGFGASGDGKEVEEGRKVEIMEKEAAGTGEVTLQEWIGPSDAIEGYVPRRDRVVGGPKKEAKQNDACSAEQSSNINVDSRNASSGESGMVLTENTKAKKKEATKTPLKMFKQDEDNDMLSSCISDSIVKQLEDVVLEEKKDKKKNKAAKGTSRVGKSKPAKRPVGRDGHEVDFTSTIIMGDRGSEMMDHGALGQYNFSSSILANEQPSSSQYAAIDSVQAYTEELDELFSNAVNIAKDETSDDSGRCTLRSSLKAVGSKNAGHSVKWADENGSVLETSRAFVSHSSKSQESMDSSVRRESAEACAAALIEAAEAISSGTSEVEDAVSKAGIIILPDMVNQQQYNNDYDNDKDAGENEIFEIDRGVVKWPKKTVLLDTDMFDVDDSWHDTPPEGFSLTLSSFATMWAALFGWVSRSSLAYVYGLDESSMEDLLIAGGRECPQKRVLNDGHSSEIRRALDTCVCNALPVLVSNLRMQIPVSKLEITLGYLLDTMSFVDALPSLRSRQWQLMVLVLLDALSLHRLPALAPIMSDSKLLQKLLNSAQVSREEYDSMIDLLLPFGRSTQSQASLPS</sequence>
<accession>Q6AVZ9</accession>
<accession>A0A0N7KK38</accession>
<accession>Q0DKZ3</accession>
<keyword id="KW-0378">Hydrolase</keyword>
<keyword id="KW-0479">Metal-binding</keyword>
<keyword id="KW-0539">Nucleus</keyword>
<keyword id="KW-0904">Protein phosphatase</keyword>
<keyword id="KW-1185">Reference proteome</keyword>
<keyword id="KW-0862">Zinc</keyword>
<keyword id="KW-0863">Zinc-finger</keyword>
<reference key="1">
    <citation type="journal article" date="2005" name="Mol. Genet. Genomics">
        <title>A fine physical map of the rice chromosome 5.</title>
        <authorList>
            <person name="Cheng C.-H."/>
            <person name="Chung M.C."/>
            <person name="Liu S.-M."/>
            <person name="Chen S.-K."/>
            <person name="Kao F.Y."/>
            <person name="Lin S.-J."/>
            <person name="Hsiao S.-H."/>
            <person name="Tseng I.C."/>
            <person name="Hsing Y.-I.C."/>
            <person name="Wu H.-P."/>
            <person name="Chen C.-S."/>
            <person name="Shaw J.-F."/>
            <person name="Wu J."/>
            <person name="Matsumoto T."/>
            <person name="Sasaki T."/>
            <person name="Chen H.-C."/>
            <person name="Chow T.-Y."/>
        </authorList>
    </citation>
    <scope>NUCLEOTIDE SEQUENCE [LARGE SCALE GENOMIC DNA]</scope>
    <source>
        <strain>cv. Nipponbare</strain>
    </source>
</reference>
<reference key="2">
    <citation type="journal article" date="2005" name="Nature">
        <title>The map-based sequence of the rice genome.</title>
        <authorList>
            <consortium name="International rice genome sequencing project (IRGSP)"/>
        </authorList>
    </citation>
    <scope>NUCLEOTIDE SEQUENCE [LARGE SCALE GENOMIC DNA]</scope>
    <source>
        <strain>cv. Nipponbare</strain>
    </source>
</reference>
<reference key="3">
    <citation type="journal article" date="2008" name="Nucleic Acids Res.">
        <title>The rice annotation project database (RAP-DB): 2008 update.</title>
        <authorList>
            <consortium name="The rice annotation project (RAP)"/>
        </authorList>
    </citation>
    <scope>GENOME REANNOTATION</scope>
    <source>
        <strain>cv. Nipponbare</strain>
    </source>
</reference>
<reference key="4">
    <citation type="journal article" date="2013" name="Rice">
        <title>Improvement of the Oryza sativa Nipponbare reference genome using next generation sequence and optical map data.</title>
        <authorList>
            <person name="Kawahara Y."/>
            <person name="de la Bastide M."/>
            <person name="Hamilton J.P."/>
            <person name="Kanamori H."/>
            <person name="McCombie W.R."/>
            <person name="Ouyang S."/>
            <person name="Schwartz D.C."/>
            <person name="Tanaka T."/>
            <person name="Wu J."/>
            <person name="Zhou S."/>
            <person name="Childs K.L."/>
            <person name="Davidson R.M."/>
            <person name="Lin H."/>
            <person name="Quesada-Ocampo L."/>
            <person name="Vaillancourt B."/>
            <person name="Sakai H."/>
            <person name="Lee S.S."/>
            <person name="Kim J."/>
            <person name="Numa H."/>
            <person name="Itoh T."/>
            <person name="Buell C.R."/>
            <person name="Matsumoto T."/>
        </authorList>
    </citation>
    <scope>GENOME REANNOTATION</scope>
    <source>
        <strain>cv. Nipponbare</strain>
    </source>
</reference>
<reference key="5">
    <citation type="journal article" date="2005" name="PLoS Biol.">
        <title>The genomes of Oryza sativa: a history of duplications.</title>
        <authorList>
            <person name="Yu J."/>
            <person name="Wang J."/>
            <person name="Lin W."/>
            <person name="Li S."/>
            <person name="Li H."/>
            <person name="Zhou J."/>
            <person name="Ni P."/>
            <person name="Dong W."/>
            <person name="Hu S."/>
            <person name="Zeng C."/>
            <person name="Zhang J."/>
            <person name="Zhang Y."/>
            <person name="Li R."/>
            <person name="Xu Z."/>
            <person name="Li S."/>
            <person name="Li X."/>
            <person name="Zheng H."/>
            <person name="Cong L."/>
            <person name="Lin L."/>
            <person name="Yin J."/>
            <person name="Geng J."/>
            <person name="Li G."/>
            <person name="Shi J."/>
            <person name="Liu J."/>
            <person name="Lv H."/>
            <person name="Li J."/>
            <person name="Wang J."/>
            <person name="Deng Y."/>
            <person name="Ran L."/>
            <person name="Shi X."/>
            <person name="Wang X."/>
            <person name="Wu Q."/>
            <person name="Li C."/>
            <person name="Ren X."/>
            <person name="Wang J."/>
            <person name="Wang X."/>
            <person name="Li D."/>
            <person name="Liu D."/>
            <person name="Zhang X."/>
            <person name="Ji Z."/>
            <person name="Zhao W."/>
            <person name="Sun Y."/>
            <person name="Zhang Z."/>
            <person name="Bao J."/>
            <person name="Han Y."/>
            <person name="Dong L."/>
            <person name="Ji J."/>
            <person name="Chen P."/>
            <person name="Wu S."/>
            <person name="Liu J."/>
            <person name="Xiao Y."/>
            <person name="Bu D."/>
            <person name="Tan J."/>
            <person name="Yang L."/>
            <person name="Ye C."/>
            <person name="Zhang J."/>
            <person name="Xu J."/>
            <person name="Zhou Y."/>
            <person name="Yu Y."/>
            <person name="Zhang B."/>
            <person name="Zhuang S."/>
            <person name="Wei H."/>
            <person name="Liu B."/>
            <person name="Lei M."/>
            <person name="Yu H."/>
            <person name="Li Y."/>
            <person name="Xu H."/>
            <person name="Wei S."/>
            <person name="He X."/>
            <person name="Fang L."/>
            <person name="Zhang Z."/>
            <person name="Zhang Y."/>
            <person name="Huang X."/>
            <person name="Su Z."/>
            <person name="Tong W."/>
            <person name="Li J."/>
            <person name="Tong Z."/>
            <person name="Li S."/>
            <person name="Ye J."/>
            <person name="Wang L."/>
            <person name="Fang L."/>
            <person name="Lei T."/>
            <person name="Chen C.-S."/>
            <person name="Chen H.-C."/>
            <person name="Xu Z."/>
            <person name="Li H."/>
            <person name="Huang H."/>
            <person name="Zhang F."/>
            <person name="Xu H."/>
            <person name="Li N."/>
            <person name="Zhao C."/>
            <person name="Li S."/>
            <person name="Dong L."/>
            <person name="Huang Y."/>
            <person name="Li L."/>
            <person name="Xi Y."/>
            <person name="Qi Q."/>
            <person name="Li W."/>
            <person name="Zhang B."/>
            <person name="Hu W."/>
            <person name="Zhang Y."/>
            <person name="Tian X."/>
            <person name="Jiao Y."/>
            <person name="Liang X."/>
            <person name="Jin J."/>
            <person name="Gao L."/>
            <person name="Zheng W."/>
            <person name="Hao B."/>
            <person name="Liu S.-M."/>
            <person name="Wang W."/>
            <person name="Yuan L."/>
            <person name="Cao M."/>
            <person name="McDermott J."/>
            <person name="Samudrala R."/>
            <person name="Wang J."/>
            <person name="Wong G.K.-S."/>
            <person name="Yang H."/>
        </authorList>
    </citation>
    <scope>NUCLEOTIDE SEQUENCE [LARGE SCALE GENOMIC DNA]</scope>
    <source>
        <strain>cv. Nipponbare</strain>
    </source>
</reference>
<proteinExistence type="inferred from homology"/>
<protein>
    <recommendedName>
        <fullName>Putative RNA polymerase II subunit B1 CTD phosphatase RPAP2 homolog</fullName>
        <ecNumber>3.1.3.16</ecNumber>
    </recommendedName>
    <alternativeName>
        <fullName>RNA polymerase II-associated protein 2 homolog</fullName>
    </alternativeName>
</protein>
<organism>
    <name type="scientific">Oryza sativa subsp. japonica</name>
    <name type="common">Rice</name>
    <dbReference type="NCBI Taxonomy" id="39947"/>
    <lineage>
        <taxon>Eukaryota</taxon>
        <taxon>Viridiplantae</taxon>
        <taxon>Streptophyta</taxon>
        <taxon>Embryophyta</taxon>
        <taxon>Tracheophyta</taxon>
        <taxon>Spermatophyta</taxon>
        <taxon>Magnoliopsida</taxon>
        <taxon>Liliopsida</taxon>
        <taxon>Poales</taxon>
        <taxon>Poaceae</taxon>
        <taxon>BOP clade</taxon>
        <taxon>Oryzoideae</taxon>
        <taxon>Oryzeae</taxon>
        <taxon>Oryzinae</taxon>
        <taxon>Oryza</taxon>
        <taxon>Oryza sativa</taxon>
    </lineage>
</organism>
<name>RPAP2_ORYSJ</name>
<feature type="chain" id="PRO_0000416292" description="Putative RNA polymerase II subunit B1 CTD phosphatase RPAP2 homolog">
    <location>
        <begin position="1"/>
        <end position="726"/>
    </location>
</feature>
<feature type="zinc finger region" description="RTR1-type" evidence="2">
    <location>
        <begin position="43"/>
        <end position="131"/>
    </location>
</feature>
<feature type="region of interest" description="Disordered" evidence="3">
    <location>
        <begin position="209"/>
        <end position="242"/>
    </location>
</feature>
<feature type="region of interest" description="Disordered" evidence="3">
    <location>
        <begin position="294"/>
        <end position="323"/>
    </location>
</feature>
<feature type="compositionally biased region" description="Basic and acidic residues" evidence="3">
    <location>
        <begin position="209"/>
        <end position="218"/>
    </location>
</feature>
<feature type="compositionally biased region" description="Polar residues" evidence="3">
    <location>
        <begin position="220"/>
        <end position="241"/>
    </location>
</feature>
<feature type="binding site" evidence="2">
    <location>
        <position position="66"/>
    </location>
    <ligand>
        <name>Zn(2+)</name>
        <dbReference type="ChEBI" id="CHEBI:29105"/>
    </ligand>
</feature>
<feature type="binding site" evidence="2">
    <location>
        <position position="71"/>
    </location>
    <ligand>
        <name>Zn(2+)</name>
        <dbReference type="ChEBI" id="CHEBI:29105"/>
    </ligand>
</feature>
<feature type="binding site" evidence="2">
    <location>
        <position position="107"/>
    </location>
    <ligand>
        <name>Zn(2+)</name>
        <dbReference type="ChEBI" id="CHEBI:29105"/>
    </ligand>
</feature>
<feature type="binding site" evidence="2">
    <location>
        <position position="111"/>
    </location>
    <ligand>
        <name>Zn(2+)</name>
        <dbReference type="ChEBI" id="CHEBI:29105"/>
    </ligand>
</feature>